<comment type="function">
    <text evidence="1">Factor of infectivity and pathogenicity, required for optimal virus replication. Alters numerous pathways of T-lymphocyte function and down-regulates immunity surface molecules in order to evade host defense and increase viral infectivity. Alters the functionality of other immunity cells, like dendritic cells, monocytes/macrophages and NK cells.</text>
</comment>
<comment type="function">
    <text evidence="1">In infected CD4(+) T-lymphocytes, down-regulates the surface MHC-I, mature MHC-II, CD4, CD28, CCR5 and CXCR4 molecules. Mediates internalization and degradation of host CD4 through the interaction of with the cytoplasmic tail of CD4, the recruitment of AP-2 (clathrin adapter protein complex 2), internalization through clathrin coated pits, and subsequent transport to endosomes and lysosomes for degradation. Diverts host MHC-I molecules to the trans-Golgi network-associated endosomal compartments by an endocytic pathway to finally target them for degradation. MHC-I down-regulation may involve AP-1 (clathrin adapter protein complex 1) or possibly Src family kinase-ZAP70/Syk-PI3K cascade recruited by PACS2. In consequence infected cells are masked for immune recognition by cytotoxic T-lymphocytes. Decreasing the number of immune receptors also prevents reinfection by more HIV particles (superinfection). Down-regulates host SERINC3 and SERINC5 thereby excluding these proteins from the viral particles. Virion infectivity is drastically higher when SERINC3 or SERINC5 are excluded from the viral envelope, because these host antiviral proteins impair the membrane fusion event necessary for subsequent virion penetration.</text>
</comment>
<comment type="function">
    <text evidence="1">Bypasses host T-cell signaling by inducing a transcriptional program nearly identical to that of anti-CD3 cell activation. Interaction with TCR-zeta chain up-regulates the Fas ligand (FasL). Increasing surface FasL molecules and decreasing surface MHC-I molecules on infected CD4(+) cells send attacking cytotoxic CD8+ T-lymphocytes into apoptosis.</text>
</comment>
<comment type="function">
    <text evidence="1">Plays a role in optimizing the host cell environment for viral replication without causing cell death by apoptosis. Protects the infected cells from apoptosis in order to keep them alive until the next virus generation is ready to strike. Inhibits the Fas and TNFR-mediated death signals by blocking MAP3K5/ASK1. Decreases the half-life of TP53, protecting the infected cell against p53-mediated apoptosis. Inhibits the apoptotic signals regulated by the Bcl-2 family proteins through the formation of a Nef/PI3-kinase/PAK2 complex that leads to activation of PAK2 and induces phosphorylation of host BAD.</text>
</comment>
<comment type="function">
    <text evidence="1">Extracellular Nef protein targets CD4(+) T-lymphocytes for apoptosis by interacting with CXCR4 surface receptors.</text>
</comment>
<comment type="subunit">
    <text evidence="1">Monomer; cytosolic form. Homodimer; membrane bound form. Interacts with Nef associated p21-activated kinase (PAK2); this interaction activates PAK2. Associates with the Nef-MHC-I-AP1 complex; this complex is required for MHC-I internalization. Interacts (via C-terminus) with host PI3-kinase. Interacts with host PACS1; this interaction seems to be weak. Interacts with host PACS2. Interacts with host LCK and MAPK3; these interactions inhibit the kinase activity of the latter. Interacts with host ATP6V1H; this interaction may play a role in CD4 endocytosis. Associates with the CD4-Nef-AP2 complex; this complex is required for CD4 internalization. Interacts with host AP2 subunit alpha and AP2 subunit sigma2. Interacts with TCR-zeta chain; this interaction up-regulates the Fas ligand (FasL) surface expression. Interacts with host HCK, LYN, and SRC; these interactions activate the Src family kinases. Interacts with MAP3K5; this interaction inhibits the Fas and TNFR-mediated death signals. Interacts with beta-COP and PTE1. Interacts with human RACK1; this increases Nef phosphorylation by PKC. Interacts with TP53; this interaction decreases the half-life of TP53, protecting the infected cell against p53-mediated apoptosis.</text>
</comment>
<comment type="subcellular location">
    <subcellularLocation>
        <location evidence="1">Host cell membrane</location>
        <topology evidence="1">Lipid-anchor</topology>
        <orientation evidence="1">Cytoplasmic side</orientation>
    </subcellularLocation>
    <subcellularLocation>
        <location evidence="1">Virion</location>
    </subcellularLocation>
    <subcellularLocation>
        <location evidence="1">Secreted</location>
    </subcellularLocation>
    <subcellularLocation>
        <location evidence="1">Host Golgi apparatus membrane</location>
    </subcellularLocation>
    <text evidence="1">TGN localization requires PACS1. Associates with the inner plasma membrane through its N-terminal domain. Nef stimulates its own export via the release of exosomes. Incorporated in virions at a rate of about 10 molecules per virion, where it is cleaved.</text>
</comment>
<comment type="induction">
    <text evidence="1">Expressed early in the viral replication cycle.</text>
</comment>
<comment type="domain">
    <text evidence="1">The N-terminal domain is composed of the N-myristoyl glycine and of a cluster of positively charged amino acids. It is required for inner plasma membrane targeting of Nef and virion incorporation, and thereby for infectivity. This domain is also involved in binding to TP53.</text>
</comment>
<comment type="domain">
    <text evidence="1">The SH3-binding domain constituted of PxxP motifs mediates binding to several Src family proteins thereby regulating their tyrosine kinase activity. The same motifs also mediates the association with MAPK3, PI3-kinase and TCR-zeta.</text>
</comment>
<comment type="domain">
    <text evidence="1">The dileucine internalization motif and a diacidic motif seem to be required for binding to AP-2.</text>
</comment>
<comment type="domain">
    <text evidence="1">The acidic region binds to the sorting protein PACS-2, which targets Nef to the paranuclear region, enabling the PxxP motif to direct assembly of an SFK/ZAP-70/PI3K complex that accelerates endocytosis of cell-surface MHC-I.</text>
</comment>
<comment type="PTM">
    <text evidence="1">The virion-associated Nef proteins are cleaved by the viral protease to release the soluble C-terminal core protein. Nef is probably cleaved concomitantly with viral structural proteins on maturation of virus particles.</text>
</comment>
<comment type="PTM">
    <text evidence="1">Myristoylated.</text>
</comment>
<comment type="PTM">
    <text evidence="1">Phosphorylated on serine residues, probably by host PKCdelta and theta.</text>
</comment>
<comment type="miscellaneous">
    <text evidence="1">HIV-1 lineages are divided in three main groups, M (for Major), O (for Outlier), and N (for New, or Non-M, Non-O). The vast majority of strains found worldwide belong to the group M. Group O seems to be endemic to and largely confined to Cameroon and neighboring countries in West Central Africa, where these viruses represent a small minority of HIV-1 strains. The group N is represented by a limited number of isolates from Cameroonian persons. The group M is further subdivided in 9 clades or subtypes (A to D, F to H, J and K).</text>
</comment>
<comment type="similarity">
    <text evidence="1">Belongs to the lentivirus primate group Nef protein family.</text>
</comment>
<evidence type="ECO:0000255" key="1">
    <source>
        <dbReference type="HAMAP-Rule" id="MF_04078"/>
    </source>
</evidence>
<name>NEF_HV1AN</name>
<protein>
    <recommendedName>
        <fullName evidence="1">Protein Nef</fullName>
    </recommendedName>
    <alternativeName>
        <fullName evidence="1">3'ORF</fullName>
    </alternativeName>
    <alternativeName>
        <fullName evidence="1">Negative factor</fullName>
        <shortName evidence="1">F-protein</shortName>
    </alternativeName>
    <component>
        <recommendedName>
            <fullName evidence="1">C-terminal core protein</fullName>
        </recommendedName>
    </component>
</protein>
<organism>
    <name type="scientific">Human immunodeficiency virus type 1 group O (isolate ANT70)</name>
    <name type="common">HIV-1</name>
    <dbReference type="NCBI Taxonomy" id="327105"/>
    <lineage>
        <taxon>Viruses</taxon>
        <taxon>Riboviria</taxon>
        <taxon>Pararnavirae</taxon>
        <taxon>Artverviricota</taxon>
        <taxon>Revtraviricetes</taxon>
        <taxon>Ortervirales</taxon>
        <taxon>Retroviridae</taxon>
        <taxon>Orthoretrovirinae</taxon>
        <taxon>Lentivirus</taxon>
        <taxon>Human immunodeficiency virus type 1</taxon>
    </lineage>
</organism>
<keyword id="KW-0002">3D-structure</keyword>
<keyword id="KW-0014">AIDS</keyword>
<keyword id="KW-0053">Apoptosis</keyword>
<keyword id="KW-0244">Early protein</keyword>
<keyword id="KW-1032">Host cell membrane</keyword>
<keyword id="KW-1040">Host Golgi apparatus</keyword>
<keyword id="KW-1043">Host membrane</keyword>
<keyword id="KW-0945">Host-virus interaction</keyword>
<keyword id="KW-1080">Inhibition of host adaptive immune response by virus</keyword>
<keyword id="KW-1083">Inhibition of host autophagy by virus</keyword>
<keyword id="KW-1115">Inhibition of host MHC class I molecule presentation by virus</keyword>
<keyword id="KW-1116">Inhibition of host MHC class II molecule presentation by virus</keyword>
<keyword id="KW-0449">Lipoprotein</keyword>
<keyword id="KW-0472">Membrane</keyword>
<keyword id="KW-0519">Myristate</keyword>
<keyword id="KW-0597">Phosphoprotein</keyword>
<keyword id="KW-1185">Reference proteome</keyword>
<keyword id="KW-0964">Secreted</keyword>
<keyword id="KW-0729">SH3-binding</keyword>
<keyword id="KW-0899">Viral immunoevasion</keyword>
<keyword id="KW-0946">Virion</keyword>
<keyword id="KW-0843">Virulence</keyword>
<proteinExistence type="evidence at protein level"/>
<dbReference type="EMBL" id="L20587">
    <property type="protein sequence ID" value="AAA99884.1"/>
    <property type="molecule type" value="Genomic_RNA"/>
</dbReference>
<dbReference type="PDB" id="3WLB">
    <property type="method" value="X-ray"/>
    <property type="resolution" value="2.00 A"/>
    <property type="chains" value="C=132-141"/>
</dbReference>
<dbReference type="PDBsum" id="3WLB"/>
<dbReference type="SMR" id="Q77378"/>
<dbReference type="EvolutionaryTrace" id="Q77378"/>
<dbReference type="Proteomes" id="UP000007689">
    <property type="component" value="Segment"/>
</dbReference>
<dbReference type="GO" id="GO:0005576">
    <property type="term" value="C:extracellular region"/>
    <property type="evidence" value="ECO:0007669"/>
    <property type="project" value="UniProtKB-SubCell"/>
</dbReference>
<dbReference type="GO" id="GO:0044178">
    <property type="term" value="C:host cell Golgi membrane"/>
    <property type="evidence" value="ECO:0007669"/>
    <property type="project" value="UniProtKB-SubCell"/>
</dbReference>
<dbReference type="GO" id="GO:0020002">
    <property type="term" value="C:host cell plasma membrane"/>
    <property type="evidence" value="ECO:0007669"/>
    <property type="project" value="UniProtKB-SubCell"/>
</dbReference>
<dbReference type="GO" id="GO:0016020">
    <property type="term" value="C:membrane"/>
    <property type="evidence" value="ECO:0007669"/>
    <property type="project" value="UniProtKB-UniRule"/>
</dbReference>
<dbReference type="GO" id="GO:0044423">
    <property type="term" value="C:virion component"/>
    <property type="evidence" value="ECO:0007669"/>
    <property type="project" value="UniProtKB-UniRule"/>
</dbReference>
<dbReference type="GO" id="GO:0005525">
    <property type="term" value="F:GTP binding"/>
    <property type="evidence" value="ECO:0007669"/>
    <property type="project" value="UniProtKB-UniRule"/>
</dbReference>
<dbReference type="GO" id="GO:0017124">
    <property type="term" value="F:SH3 domain binding"/>
    <property type="evidence" value="ECO:0007669"/>
    <property type="project" value="UniProtKB-UniRule"/>
</dbReference>
<dbReference type="GO" id="GO:0046776">
    <property type="term" value="P:symbiont-mediated suppression of host antigen processing and presentation of peptide antigen via MHC class I"/>
    <property type="evidence" value="ECO:0007669"/>
    <property type="project" value="UniProtKB-UniRule"/>
</dbReference>
<dbReference type="GO" id="GO:0039505">
    <property type="term" value="P:symbiont-mediated suppression of host antigen processing and presentation of peptide antigen via MHC class II"/>
    <property type="evidence" value="ECO:0007669"/>
    <property type="project" value="UniProtKB-UniRule"/>
</dbReference>
<dbReference type="GO" id="GO:0140321">
    <property type="term" value="P:symbiont-mediated suppression of host autophagy"/>
    <property type="evidence" value="ECO:0007669"/>
    <property type="project" value="UniProtKB-KW"/>
</dbReference>
<dbReference type="Gene3D" id="4.10.890.10">
    <property type="entry name" value="HIV 1 nef anchor domain"/>
    <property type="match status" value="1"/>
</dbReference>
<dbReference type="Gene3D" id="3.30.62.10">
    <property type="entry name" value="Nef Regulatory Factor"/>
    <property type="match status" value="1"/>
</dbReference>
<dbReference type="HAMAP" id="MF_04078">
    <property type="entry name" value="NEF_HIV"/>
    <property type="match status" value="1"/>
</dbReference>
<dbReference type="InterPro" id="IPR027480">
    <property type="entry name" value="HIV-1_Nef_anchor_sf"/>
</dbReference>
<dbReference type="InterPro" id="IPR027481">
    <property type="entry name" value="HIV-1_Nef_core_sf"/>
</dbReference>
<dbReference type="InterPro" id="IPR001558">
    <property type="entry name" value="HIV_Nef"/>
</dbReference>
<dbReference type="Pfam" id="PF00469">
    <property type="entry name" value="F-protein"/>
    <property type="match status" value="1"/>
</dbReference>
<dbReference type="SUPFAM" id="SSF55671">
    <property type="entry name" value="Regulatory factor Nef"/>
    <property type="match status" value="1"/>
</dbReference>
<gene>
    <name evidence="1" type="primary">nef</name>
</gene>
<organismHost>
    <name type="scientific">Homo sapiens</name>
    <name type="common">Human</name>
    <dbReference type="NCBI Taxonomy" id="9606"/>
</organismHost>
<accession>Q77378</accession>
<feature type="initiator methionine" description="Removed; by host" evidence="1">
    <location>
        <position position="1"/>
    </location>
</feature>
<feature type="chain" id="PRO_0000440992" description="Protein Nef" evidence="1">
    <location>
        <begin position="2"/>
        <end position="213"/>
    </location>
</feature>
<feature type="chain" id="PRO_0000440993" description="C-terminal core protein" evidence="1">
    <location>
        <begin position="64"/>
        <end position="213"/>
    </location>
</feature>
<feature type="region of interest" description="Acidic; interacts with host PACS1 and PACS2; stabilizes the interaction of NEF/MHC-I with host AP1M1; necessary for MHC-I internalization" evidence="1">
    <location>
        <begin position="68"/>
        <end position="71"/>
    </location>
</feature>
<feature type="region of interest" description="SH3-binding; interaction with Src family tyrosine kinases" evidence="1">
    <location>
        <begin position="75"/>
        <end position="84"/>
    </location>
</feature>
<feature type="region of interest" description="Mediates dimerization, Nef-PTE1 interaction" evidence="1">
    <location>
        <begin position="114"/>
        <end position="130"/>
    </location>
</feature>
<feature type="region of interest" description="Binding to ATP6V1H" evidence="1">
    <location>
        <begin position="154"/>
        <end position="187"/>
    </location>
</feature>
<feature type="short sequence motif" description="PxxP; stabilizes the interaction of NEF/MHC-I with host AP1M1; necessary for MHC-I internalization" evidence="1">
    <location>
        <begin position="78"/>
        <end position="81"/>
    </location>
</feature>
<feature type="short sequence motif" description="Dileucine internalization motif; necessary for CD4 internalization" evidence="1">
    <location>
        <begin position="171"/>
        <end position="172"/>
    </location>
</feature>
<feature type="short sequence motif" description="Diacidic; necessary for CD4 internalization" evidence="1">
    <location>
        <begin position="181"/>
        <end position="182"/>
    </location>
</feature>
<feature type="site" description="Might play a role in AP-1 recruitment to the Nef-MHC-I complex" evidence="1">
    <location>
        <position position="20"/>
    </location>
</feature>
<feature type="site" description="Cleavage; by viral protease" evidence="1">
    <location>
        <begin position="63"/>
        <end position="64"/>
    </location>
</feature>
<feature type="lipid moiety-binding region" description="N-myristoyl glycine; by host" evidence="1">
    <location>
        <position position="2"/>
    </location>
</feature>
<reference key="1">
    <citation type="journal article" date="1994" name="J. Virol.">
        <title>Genomic cloning and complete sequence analysis of a highly divergent African human immunodeficiency virus isolate.</title>
        <authorList>
            <person name="Vanden Haesevelde M."/>
            <person name="Decourt J.L."/>
            <person name="De Leys R.J."/>
            <person name="Vanderborght B."/>
            <person name="van der Groen G."/>
            <person name="van Heuverswijn H."/>
            <person name="Saman E."/>
        </authorList>
    </citation>
    <scope>NUCLEOTIDE SEQUENCE [GENOMIC RNA]</scope>
</reference>
<sequence length="213" mass="24100">MGNALRKGKFEGWAAVRERMRRTRTFPESEPCAPGVGQISRELAARGGIPSSHTPQNNAALAFLESHQEEEVGFPVAPQVPLRPMTYKGAFDLSFFLKEKGGLEGLIYSHKRAEILDLWVYNTQGFFPDWQNYTPGPGTRFPLTFGWLFKLVPVSEEEAERLGNTCERANLLHPACAHGFEDTHKEILMWKFDRSLGNTHVAMITHPELFQKD</sequence>